<name>MVP_ORSVJ</name>
<feature type="chain" id="PRO_0000144960" description="Movement protein">
    <location>
        <begin position="1"/>
        <end position="303"/>
    </location>
</feature>
<proteinExistence type="inferred from homology"/>
<accession>P22590</accession>
<keyword id="KW-1031">Host cell junction</keyword>
<keyword id="KW-1035">Host cytoplasm</keyword>
<keyword id="KW-1037">Host cytoskeleton</keyword>
<keyword id="KW-0694">RNA-binding</keyword>
<keyword id="KW-0813">Transport</keyword>
<keyword id="KW-0916">Viral movement protein</keyword>
<evidence type="ECO:0000250" key="1">
    <source>
        <dbReference type="UniProtKB" id="P03583"/>
    </source>
</evidence>
<evidence type="ECO:0000250" key="2">
    <source>
        <dbReference type="UniProtKB" id="P69513"/>
    </source>
</evidence>
<evidence type="ECO:0000305" key="3"/>
<dbReference type="EMBL" id="X55296">
    <property type="protein sequence ID" value="CAA39008.1"/>
    <property type="molecule type" value="Genomic_RNA"/>
</dbReference>
<dbReference type="PIR" id="JQ1265">
    <property type="entry name" value="JQ1265"/>
</dbReference>
<dbReference type="GO" id="GO:0030430">
    <property type="term" value="C:host cell cytoplasm"/>
    <property type="evidence" value="ECO:0007669"/>
    <property type="project" value="UniProtKB-KW"/>
</dbReference>
<dbReference type="GO" id="GO:0044219">
    <property type="term" value="C:host cell plasmodesma"/>
    <property type="evidence" value="ECO:0007669"/>
    <property type="project" value="UniProtKB-SubCell"/>
</dbReference>
<dbReference type="GO" id="GO:0044163">
    <property type="term" value="C:host cytoskeleton"/>
    <property type="evidence" value="ECO:0007669"/>
    <property type="project" value="UniProtKB-SubCell"/>
</dbReference>
<dbReference type="GO" id="GO:0003723">
    <property type="term" value="F:RNA binding"/>
    <property type="evidence" value="ECO:0007669"/>
    <property type="project" value="UniProtKB-KW"/>
</dbReference>
<dbReference type="GO" id="GO:0046740">
    <property type="term" value="P:transport of virus in host, cell to cell"/>
    <property type="evidence" value="ECO:0007669"/>
    <property type="project" value="UniProtKB-KW"/>
</dbReference>
<dbReference type="InterPro" id="IPR001022">
    <property type="entry name" value="TMV_movement"/>
</dbReference>
<dbReference type="InterPro" id="IPR028919">
    <property type="entry name" value="Viral_movement"/>
</dbReference>
<dbReference type="Pfam" id="PF01107">
    <property type="entry name" value="MP"/>
    <property type="match status" value="1"/>
</dbReference>
<dbReference type="PRINTS" id="PR00964">
    <property type="entry name" value="MOVEMENT"/>
</dbReference>
<organismHost>
    <name type="scientific">Cymbidium</name>
    <dbReference type="NCBI Taxonomy" id="14366"/>
</organismHost>
<organismHost>
    <name type="scientific">Odontoglossum</name>
    <dbReference type="NCBI Taxonomy" id="154697"/>
</organismHost>
<comment type="function">
    <text evidence="1 2">Transports viral genome to neighboring plant cells directly through plasmosdesmata, without any budding. The movement protein allows efficient cell to cell propagation, by bypassing the host cell wall barrier. Forms a ribonucleoprotein complex with viral RNA. Binds microtubules and modulates microtubule stability. Can bind double-stranded DNA.</text>
</comment>
<comment type="subcellular location">
    <subcellularLocation>
        <location evidence="2">Host cytoplasm</location>
        <location evidence="2">Host cytoskeleton</location>
    </subcellularLocation>
    <subcellularLocation>
        <location evidence="2">Host cell junction</location>
        <location evidence="2">Host plasmodesma</location>
    </subcellularLocation>
</comment>
<comment type="similarity">
    <text evidence="3">Belongs to the tobamovirus movement protein family.</text>
</comment>
<reference key="1">
    <citation type="journal article" date="1990" name="Nucleic Acids Res.">
        <title>Nucleotide sequence of cell-to-cell transport protein gene of odontoglossum ringspot virus.</title>
        <authorList>
            <person name="Isomura Y."/>
            <person name="Matumoto Y."/>
            <person name="Murayama A."/>
            <person name="Chatani M."/>
            <person name="Inouye N."/>
            <person name="Ikegami M."/>
        </authorList>
    </citation>
    <scope>NUCLEOTIDE SEQUENCE [GENOMIC RNA]</scope>
</reference>
<organism>
    <name type="scientific">Odontoglossum ringspot virus (isolate Japan)</name>
    <name type="common">ORSV</name>
    <dbReference type="NCBI Taxonomy" id="138307"/>
    <lineage>
        <taxon>Viruses</taxon>
        <taxon>Riboviria</taxon>
        <taxon>Orthornavirae</taxon>
        <taxon>Kitrinoviricota</taxon>
        <taxon>Alsuviricetes</taxon>
        <taxon>Martellivirales</taxon>
        <taxon>Virgaviridae</taxon>
        <taxon>Tobamovirus</taxon>
        <taxon>Odontoglossum ringspot virus</taxon>
    </lineage>
</organism>
<protein>
    <recommendedName>
        <fullName>Movement protein</fullName>
    </recommendedName>
    <alternativeName>
        <fullName>33.4 kDa protein</fullName>
    </alternativeName>
    <alternativeName>
        <fullName>Cell-to-cell transport protein</fullName>
    </alternativeName>
</protein>
<gene>
    <name type="primary">MP</name>
</gene>
<sequence length="303" mass="33401">MGRLRFVVLLSIFPIKTFSEPCSTMALVLRDSIKISEFINLSASEKLLPSALTAVKSVRISKVDKIISYENDTLSDIDLLKGVKLVENGYVCLAGLVVTGEWNLPDNCKGGVSICLVDKRMKRANEATLGSYHTSACKKRFTFKIIPNYSVTTADALKGIWQVMTNIRGVEMEKGFCPLSLEFVSICVVYLNNIKLGLREKILNVTEGGPTELTEAVVDEFVEKVPMAARLKSFRSVNKKKPSNSSKFVNGKSRLNSRNKLNYENGDSDVGISVVDDIVVGNGVSDIRIDDDCESFDAQSDSY</sequence>